<gene>
    <name evidence="1" type="primary">prfA</name>
    <name type="ordered locus">BT9727_5013</name>
</gene>
<proteinExistence type="inferred from homology"/>
<keyword id="KW-0963">Cytoplasm</keyword>
<keyword id="KW-0488">Methylation</keyword>
<keyword id="KW-0648">Protein biosynthesis</keyword>
<protein>
    <recommendedName>
        <fullName evidence="1">Peptide chain release factor 1</fullName>
        <shortName evidence="1">RF-1</shortName>
    </recommendedName>
</protein>
<dbReference type="EMBL" id="AE017355">
    <property type="protein sequence ID" value="AAT62616.1"/>
    <property type="status" value="ALT_INIT"/>
    <property type="molecule type" value="Genomic_DNA"/>
</dbReference>
<dbReference type="RefSeq" id="WP_000887065.1">
    <property type="nucleotide sequence ID" value="NC_005957.1"/>
</dbReference>
<dbReference type="RefSeq" id="YP_039322.1">
    <property type="nucleotide sequence ID" value="NC_005957.1"/>
</dbReference>
<dbReference type="SMR" id="Q6HAV4"/>
<dbReference type="GeneID" id="75088515"/>
<dbReference type="KEGG" id="btk:BT9727_5013"/>
<dbReference type="PATRIC" id="fig|281309.8.peg.5331"/>
<dbReference type="HOGENOM" id="CLU_036856_0_1_9"/>
<dbReference type="Proteomes" id="UP000001301">
    <property type="component" value="Chromosome"/>
</dbReference>
<dbReference type="GO" id="GO:0005737">
    <property type="term" value="C:cytoplasm"/>
    <property type="evidence" value="ECO:0007669"/>
    <property type="project" value="UniProtKB-SubCell"/>
</dbReference>
<dbReference type="GO" id="GO:0016149">
    <property type="term" value="F:translation release factor activity, codon specific"/>
    <property type="evidence" value="ECO:0007669"/>
    <property type="project" value="UniProtKB-UniRule"/>
</dbReference>
<dbReference type="FunFam" id="3.30.160.20:FF:000004">
    <property type="entry name" value="Peptide chain release factor 1"/>
    <property type="match status" value="1"/>
</dbReference>
<dbReference type="FunFam" id="3.30.70.1660:FF:000002">
    <property type="entry name" value="Peptide chain release factor 1"/>
    <property type="match status" value="1"/>
</dbReference>
<dbReference type="FunFam" id="3.30.70.1660:FF:000004">
    <property type="entry name" value="Peptide chain release factor 1"/>
    <property type="match status" value="1"/>
</dbReference>
<dbReference type="Gene3D" id="3.30.160.20">
    <property type="match status" value="1"/>
</dbReference>
<dbReference type="Gene3D" id="3.30.70.1660">
    <property type="match status" value="1"/>
</dbReference>
<dbReference type="Gene3D" id="6.10.140.1950">
    <property type="match status" value="1"/>
</dbReference>
<dbReference type="HAMAP" id="MF_00093">
    <property type="entry name" value="Rel_fac_1"/>
    <property type="match status" value="1"/>
</dbReference>
<dbReference type="InterPro" id="IPR005139">
    <property type="entry name" value="PCRF"/>
</dbReference>
<dbReference type="InterPro" id="IPR000352">
    <property type="entry name" value="Pep_chain_release_fac_I"/>
</dbReference>
<dbReference type="InterPro" id="IPR045853">
    <property type="entry name" value="Pep_chain_release_fac_I_sf"/>
</dbReference>
<dbReference type="InterPro" id="IPR050057">
    <property type="entry name" value="Prokaryotic/Mito_RF"/>
</dbReference>
<dbReference type="InterPro" id="IPR004373">
    <property type="entry name" value="RF-1"/>
</dbReference>
<dbReference type="NCBIfam" id="TIGR00019">
    <property type="entry name" value="prfA"/>
    <property type="match status" value="1"/>
</dbReference>
<dbReference type="NCBIfam" id="NF001859">
    <property type="entry name" value="PRK00591.1"/>
    <property type="match status" value="1"/>
</dbReference>
<dbReference type="PANTHER" id="PTHR43804">
    <property type="entry name" value="LD18447P"/>
    <property type="match status" value="1"/>
</dbReference>
<dbReference type="PANTHER" id="PTHR43804:SF7">
    <property type="entry name" value="LD18447P"/>
    <property type="match status" value="1"/>
</dbReference>
<dbReference type="Pfam" id="PF03462">
    <property type="entry name" value="PCRF"/>
    <property type="match status" value="1"/>
</dbReference>
<dbReference type="Pfam" id="PF00472">
    <property type="entry name" value="RF-1"/>
    <property type="match status" value="1"/>
</dbReference>
<dbReference type="SMART" id="SM00937">
    <property type="entry name" value="PCRF"/>
    <property type="match status" value="1"/>
</dbReference>
<dbReference type="SUPFAM" id="SSF75620">
    <property type="entry name" value="Release factor"/>
    <property type="match status" value="1"/>
</dbReference>
<dbReference type="PROSITE" id="PS00745">
    <property type="entry name" value="RF_PROK_I"/>
    <property type="match status" value="1"/>
</dbReference>
<feature type="chain" id="PRO_0000177631" description="Peptide chain release factor 1">
    <location>
        <begin position="1"/>
        <end position="355"/>
    </location>
</feature>
<feature type="modified residue" description="N5-methylglutamine" evidence="1">
    <location>
        <position position="233"/>
    </location>
</feature>
<name>RF1_BACHK</name>
<accession>Q6HAV4</accession>
<reference key="1">
    <citation type="journal article" date="2006" name="J. Bacteriol.">
        <title>Pathogenomic sequence analysis of Bacillus cereus and Bacillus thuringiensis isolates closely related to Bacillus anthracis.</title>
        <authorList>
            <person name="Han C.S."/>
            <person name="Xie G."/>
            <person name="Challacombe J.F."/>
            <person name="Altherr M.R."/>
            <person name="Bhotika S.S."/>
            <person name="Bruce D."/>
            <person name="Campbell C.S."/>
            <person name="Campbell M.L."/>
            <person name="Chen J."/>
            <person name="Chertkov O."/>
            <person name="Cleland C."/>
            <person name="Dimitrijevic M."/>
            <person name="Doggett N.A."/>
            <person name="Fawcett J.J."/>
            <person name="Glavina T."/>
            <person name="Goodwin L.A."/>
            <person name="Hill K.K."/>
            <person name="Hitchcock P."/>
            <person name="Jackson P.J."/>
            <person name="Keim P."/>
            <person name="Kewalramani A.R."/>
            <person name="Longmire J."/>
            <person name="Lucas S."/>
            <person name="Malfatti S."/>
            <person name="McMurry K."/>
            <person name="Meincke L.J."/>
            <person name="Misra M."/>
            <person name="Moseman B.L."/>
            <person name="Mundt M."/>
            <person name="Munk A.C."/>
            <person name="Okinaka R.T."/>
            <person name="Parson-Quintana B."/>
            <person name="Reilly L.P."/>
            <person name="Richardson P."/>
            <person name="Robinson D.L."/>
            <person name="Rubin E."/>
            <person name="Saunders E."/>
            <person name="Tapia R."/>
            <person name="Tesmer J.G."/>
            <person name="Thayer N."/>
            <person name="Thompson L.S."/>
            <person name="Tice H."/>
            <person name="Ticknor L.O."/>
            <person name="Wills P.L."/>
            <person name="Brettin T.S."/>
            <person name="Gilna P."/>
        </authorList>
    </citation>
    <scope>NUCLEOTIDE SEQUENCE [LARGE SCALE GENOMIC DNA]</scope>
    <source>
        <strain>97-27</strain>
    </source>
</reference>
<sequence length="355" mass="40356">MLDRLQAVENRYEKLNELLSDPAIISDSNKLREYSKEQSDIQETVEVYREYKDVREQLKDAKAMLEDKLDAEMREMVKEEVSELESQEKTLSERLKILLVPKDPNDDKNVIVEVRGAAGGDEAALFAGDLYRMYSRYAEVQGWKTEIIEASYTELGGYKEIIFMINGKGAFAKLKFENGAHRVQRVPETESGGRIHTSTATVAVLPEAEEVEIDIHEKDVRVDTFASSGPGGQSVNTTMSAVRLTHLPTGVVVSCQDEKSQIKNKEKAMKVLRARVYDKFRQEAQAEYDQNRKQAVGTGDRSERIRTYNFPQNRVTDHRIGLTIQKLDQILQGKLDDFINALVMEDQAQRMEAAE</sequence>
<organism>
    <name type="scientific">Bacillus thuringiensis subsp. konkukian (strain 97-27)</name>
    <dbReference type="NCBI Taxonomy" id="281309"/>
    <lineage>
        <taxon>Bacteria</taxon>
        <taxon>Bacillati</taxon>
        <taxon>Bacillota</taxon>
        <taxon>Bacilli</taxon>
        <taxon>Bacillales</taxon>
        <taxon>Bacillaceae</taxon>
        <taxon>Bacillus</taxon>
        <taxon>Bacillus cereus group</taxon>
    </lineage>
</organism>
<evidence type="ECO:0000255" key="1">
    <source>
        <dbReference type="HAMAP-Rule" id="MF_00093"/>
    </source>
</evidence>
<evidence type="ECO:0000305" key="2"/>
<comment type="function">
    <text evidence="1">Peptide chain release factor 1 directs the termination of translation in response to the peptide chain termination codons UAG and UAA.</text>
</comment>
<comment type="subcellular location">
    <subcellularLocation>
        <location evidence="1">Cytoplasm</location>
    </subcellularLocation>
</comment>
<comment type="PTM">
    <text evidence="1">Methylated by PrmC. Methylation increases the termination efficiency of RF1.</text>
</comment>
<comment type="similarity">
    <text evidence="1">Belongs to the prokaryotic/mitochondrial release factor family.</text>
</comment>
<comment type="sequence caution" evidence="2">
    <conflict type="erroneous initiation">
        <sequence resource="EMBL-CDS" id="AAT62616"/>
    </conflict>
</comment>